<reference key="1">
    <citation type="journal article" date="2003" name="Genome Res.">
        <title>Genome sequence of an M3 strain of Streptococcus pyogenes reveals a large-scale genomic rearrangement in invasive strains and new insights into phage evolution.</title>
        <authorList>
            <person name="Nakagawa I."/>
            <person name="Kurokawa K."/>
            <person name="Yamashita A."/>
            <person name="Nakata M."/>
            <person name="Tomiyasu Y."/>
            <person name="Okahashi N."/>
            <person name="Kawabata S."/>
            <person name="Yamazaki K."/>
            <person name="Shiba T."/>
            <person name="Yasunaga T."/>
            <person name="Hayashi H."/>
            <person name="Hattori M."/>
            <person name="Hamada S."/>
        </authorList>
    </citation>
    <scope>NUCLEOTIDE SEQUENCE [LARGE SCALE GENOMIC DNA]</scope>
    <source>
        <strain>SSI-1</strain>
    </source>
</reference>
<sequence>MEMKQISETTLKITISMDDLEERGMELKDFLIPQEKTEEFFYSVMDELDLPDNFKDSGMLSFRVTPRKDRLDVFVTKSEINKDINLEDLAEFGDMSQMTPEDFFKSLEQSMREKGDVKAHEKLEQIEEIMEDVVEATLANQSEAADPSTNHESEPLDYVHYVLDFSTITEAVAFAKTIDFSIEASELYKGSNCYHMTILLDVQQQPSYFANVMYARLIEHANPGSKTRAYLQEHGLQLMLDGAVEQLQKIELG</sequence>
<comment type="function">
    <text evidence="1">Enables the recognition and targeting of unfolded and aggregated proteins to the ClpC protease or to other proteins involved in proteolysis.</text>
</comment>
<comment type="subunit">
    <text evidence="1">Homodimer.</text>
</comment>
<comment type="domain">
    <text>The N-terminal domain probably binds unfolded/aggregated proteins; the C-terminal domain interacts with ClpC.</text>
</comment>
<comment type="similarity">
    <text evidence="1">Belongs to the MecA family.</text>
</comment>
<gene>
    <name evidence="1" type="primary">mecA</name>
    <name type="ordered locus">SPs0212</name>
</gene>
<feature type="chain" id="PRO_0000411403" description="Adapter protein MecA">
    <location>
        <begin position="1"/>
        <end position="253"/>
    </location>
</feature>
<accession>P0DC31</accession>
<accession>Q879M2</accession>
<accession>Q8K8M5</accession>
<name>MECA_STRPQ</name>
<evidence type="ECO:0000255" key="1">
    <source>
        <dbReference type="HAMAP-Rule" id="MF_01124"/>
    </source>
</evidence>
<dbReference type="EMBL" id="BA000034">
    <property type="protein sequence ID" value="BAC63307.1"/>
    <property type="molecule type" value="Genomic_DNA"/>
</dbReference>
<dbReference type="RefSeq" id="WP_011106593.1">
    <property type="nucleotide sequence ID" value="NC_004606.1"/>
</dbReference>
<dbReference type="SMR" id="P0DC31"/>
<dbReference type="KEGG" id="sps:SPs0212"/>
<dbReference type="HOGENOM" id="CLU_071496_1_0_9"/>
<dbReference type="GO" id="GO:0030674">
    <property type="term" value="F:protein-macromolecule adaptor activity"/>
    <property type="evidence" value="ECO:0007669"/>
    <property type="project" value="UniProtKB-UniRule"/>
</dbReference>
<dbReference type="Gene3D" id="3.30.70.1950">
    <property type="match status" value="1"/>
</dbReference>
<dbReference type="HAMAP" id="MF_01124">
    <property type="entry name" value="MecA"/>
    <property type="match status" value="1"/>
</dbReference>
<dbReference type="InterPro" id="IPR038471">
    <property type="entry name" value="MecA_C_sf"/>
</dbReference>
<dbReference type="InterPro" id="IPR008681">
    <property type="entry name" value="Neg-reg_MecA"/>
</dbReference>
<dbReference type="NCBIfam" id="NF002643">
    <property type="entry name" value="PRK02315.1-4"/>
    <property type="match status" value="1"/>
</dbReference>
<dbReference type="PANTHER" id="PTHR39161">
    <property type="entry name" value="ADAPTER PROTEIN MECA"/>
    <property type="match status" value="1"/>
</dbReference>
<dbReference type="PANTHER" id="PTHR39161:SF1">
    <property type="entry name" value="ADAPTER PROTEIN MECA 1"/>
    <property type="match status" value="1"/>
</dbReference>
<dbReference type="Pfam" id="PF05389">
    <property type="entry name" value="MecA"/>
    <property type="match status" value="1"/>
</dbReference>
<dbReference type="PIRSF" id="PIRSF029008">
    <property type="entry name" value="MecA"/>
    <property type="match status" value="1"/>
</dbReference>
<organism>
    <name type="scientific">Streptococcus pyogenes serotype M3 (strain SSI-1)</name>
    <dbReference type="NCBI Taxonomy" id="193567"/>
    <lineage>
        <taxon>Bacteria</taxon>
        <taxon>Bacillati</taxon>
        <taxon>Bacillota</taxon>
        <taxon>Bacilli</taxon>
        <taxon>Lactobacillales</taxon>
        <taxon>Streptococcaceae</taxon>
        <taxon>Streptococcus</taxon>
    </lineage>
</organism>
<protein>
    <recommendedName>
        <fullName evidence="1">Adapter protein MecA</fullName>
    </recommendedName>
</protein>
<proteinExistence type="inferred from homology"/>